<organism>
    <name type="scientific">Bos taurus</name>
    <name type="common">Bovine</name>
    <dbReference type="NCBI Taxonomy" id="9913"/>
    <lineage>
        <taxon>Eukaryota</taxon>
        <taxon>Metazoa</taxon>
        <taxon>Chordata</taxon>
        <taxon>Craniata</taxon>
        <taxon>Vertebrata</taxon>
        <taxon>Euteleostomi</taxon>
        <taxon>Mammalia</taxon>
        <taxon>Eutheria</taxon>
        <taxon>Laurasiatheria</taxon>
        <taxon>Artiodactyla</taxon>
        <taxon>Ruminantia</taxon>
        <taxon>Pecora</taxon>
        <taxon>Bovidae</taxon>
        <taxon>Bovinae</taxon>
        <taxon>Bos</taxon>
    </lineage>
</organism>
<sequence length="263" mass="30324">MDQTPRRMLGQPLSSPATQPKKRSTSVMSFFSKVSWNLRLQKQEPLKNVFFILAETARDPSVKKRHMVMRGLGTMACETPDKVRKYKKIILDLLVHGLYDPVSSEVIHESMKTLTIILGKMQGKALGSFFIDITLQTRTLLDDENDSLRYSAFVLFGQLADLAGRKWKSFFTRQVKQTQDSLLTHLQDRNPQVAKACKTTFRACSPYLRQSKDYSFQNEEDQRNPKLCRQLVSERGQETFFQSLRSRCRCKAEGGRHTRELPP</sequence>
<reference key="1">
    <citation type="journal article" date="2005" name="BMC Genomics">
        <title>Characterization of 954 bovine full-CDS cDNA sequences.</title>
        <authorList>
            <person name="Harhay G.P."/>
            <person name="Sonstegard T.S."/>
            <person name="Keele J.W."/>
            <person name="Heaton M.P."/>
            <person name="Clawson M.L."/>
            <person name="Snelling W.M."/>
            <person name="Wiedmann R.T."/>
            <person name="Van Tassell C.P."/>
            <person name="Smith T.P.L."/>
        </authorList>
    </citation>
    <scope>NUCLEOTIDE SEQUENCE [LARGE SCALE MRNA]</scope>
</reference>
<comment type="subcellular location">
    <subcellularLocation>
        <location evidence="1">Nucleus</location>
        <location evidence="1">Nucleolus</location>
    </subcellularLocation>
</comment>
<feature type="chain" id="PRO_0000248196" description="Protein maestro">
    <location>
        <begin position="1"/>
        <end position="263"/>
    </location>
</feature>
<feature type="repeat" description="HEAT">
    <location>
        <begin position="128"/>
        <end position="163"/>
    </location>
</feature>
<feature type="region of interest" description="Disordered" evidence="2">
    <location>
        <begin position="1"/>
        <end position="21"/>
    </location>
</feature>
<name>MSTRO_BOVIN</name>
<protein>
    <recommendedName>
        <fullName>Protein maestro</fullName>
    </recommendedName>
    <alternativeName>
        <fullName>Male-specific transcription in the developing reproductive organs</fullName>
    </alternativeName>
</protein>
<gene>
    <name type="primary">MRO</name>
</gene>
<proteinExistence type="evidence at transcript level"/>
<accession>Q58DE2</accession>
<dbReference type="EMBL" id="BT021655">
    <property type="protein sequence ID" value="AAX46502.1"/>
    <property type="molecule type" value="mRNA"/>
</dbReference>
<dbReference type="RefSeq" id="NP_001029724.1">
    <property type="nucleotide sequence ID" value="NM_001034552.1"/>
</dbReference>
<dbReference type="RefSeq" id="XP_005224236.1">
    <property type="nucleotide sequence ID" value="XM_005224179.5"/>
</dbReference>
<dbReference type="RefSeq" id="XP_005224237.1">
    <property type="nucleotide sequence ID" value="XM_005224180.3"/>
</dbReference>
<dbReference type="RefSeq" id="XP_010817147.1">
    <property type="nucleotide sequence ID" value="XM_010818845.2"/>
</dbReference>
<dbReference type="SMR" id="Q58DE2"/>
<dbReference type="FunCoup" id="Q58DE2">
    <property type="interactions" value="20"/>
</dbReference>
<dbReference type="STRING" id="9913.ENSBTAP00000065167"/>
<dbReference type="PaxDb" id="9913-ENSBTAP00000055968"/>
<dbReference type="GeneID" id="524917"/>
<dbReference type="KEGG" id="bta:524917"/>
<dbReference type="CTD" id="83876"/>
<dbReference type="VEuPathDB" id="HostDB:ENSBTAG00000047635"/>
<dbReference type="eggNOG" id="KOG2032">
    <property type="taxonomic scope" value="Eukaryota"/>
</dbReference>
<dbReference type="InParanoid" id="Q58DE2"/>
<dbReference type="OMA" id="PMMSFFS"/>
<dbReference type="OrthoDB" id="1884734at2759"/>
<dbReference type="Proteomes" id="UP000009136">
    <property type="component" value="Chromosome 24"/>
</dbReference>
<dbReference type="Bgee" id="ENSBTAG00000047635">
    <property type="expression patterns" value="Expressed in granulosa cell and 99 other cell types or tissues"/>
</dbReference>
<dbReference type="GO" id="GO:0005730">
    <property type="term" value="C:nucleolus"/>
    <property type="evidence" value="ECO:0007669"/>
    <property type="project" value="UniProtKB-SubCell"/>
</dbReference>
<dbReference type="Gene3D" id="1.25.10.10">
    <property type="entry name" value="Leucine-rich Repeat Variant"/>
    <property type="match status" value="1"/>
</dbReference>
<dbReference type="InterPro" id="IPR011989">
    <property type="entry name" value="ARM-like"/>
</dbReference>
<dbReference type="InterPro" id="IPR016024">
    <property type="entry name" value="ARM-type_fold"/>
</dbReference>
<dbReference type="InterPro" id="IPR055406">
    <property type="entry name" value="HEAT_Maestro"/>
</dbReference>
<dbReference type="InterPro" id="IPR045206">
    <property type="entry name" value="Maestro_heat-like_prot"/>
</dbReference>
<dbReference type="PANTHER" id="PTHR23120:SF39">
    <property type="entry name" value="MAESTRO"/>
    <property type="match status" value="1"/>
</dbReference>
<dbReference type="PANTHER" id="PTHR23120">
    <property type="entry name" value="MAESTRO-RELATED HEAT DOMAIN-CONTAINING"/>
    <property type="match status" value="1"/>
</dbReference>
<dbReference type="Pfam" id="PF23227">
    <property type="entry name" value="HEAT_MROH2B_C"/>
    <property type="match status" value="1"/>
</dbReference>
<dbReference type="SUPFAM" id="SSF48371">
    <property type="entry name" value="ARM repeat"/>
    <property type="match status" value="1"/>
</dbReference>
<keyword id="KW-0539">Nucleus</keyword>
<keyword id="KW-1185">Reference proteome</keyword>
<evidence type="ECO:0000250" key="1"/>
<evidence type="ECO:0000256" key="2">
    <source>
        <dbReference type="SAM" id="MobiDB-lite"/>
    </source>
</evidence>